<feature type="signal peptide" evidence="3">
    <location>
        <begin position="1"/>
        <end position="35"/>
    </location>
</feature>
<feature type="chain" id="PRO_0000371662" description="Pectinesterase/pectinesterase inhibitor 3">
    <location>
        <begin position="36"/>
        <end position="592"/>
    </location>
</feature>
<feature type="propeptide" id="PRO_0000458965" description="Removed in mature 38 kDa form" evidence="8">
    <location>
        <begin position="36"/>
        <end position="273"/>
    </location>
</feature>
<feature type="propeptide" id="PRO_0000458966" description="Removed in mature 42 kDa form" evidence="8">
    <location>
        <begin position="36"/>
        <end position="238"/>
    </location>
</feature>
<feature type="chain" id="PRO_0000458967" description="Pectinesterase 3 of 42 kDa" evidence="8">
    <location>
        <begin position="239"/>
        <end position="592"/>
    </location>
</feature>
<feature type="chain" id="PRO_0000458968" description="Pectinesterase 3 of 38 kDa" evidence="8">
    <location>
        <begin position="274"/>
        <end position="592"/>
    </location>
</feature>
<feature type="region of interest" description="Pectinesterase inhibitor 3">
    <location>
        <begin position="53"/>
        <end position="212"/>
    </location>
</feature>
<feature type="region of interest" description="Pectinesterase 3">
    <location>
        <begin position="281"/>
        <end position="578"/>
    </location>
</feature>
<feature type="active site" description="Proton donor; for pectinesterase activity" evidence="1">
    <location>
        <position position="409"/>
    </location>
</feature>
<feature type="active site" description="Nucleophile; for pectinesterase activity" evidence="1">
    <location>
        <position position="430"/>
    </location>
</feature>
<feature type="binding site" evidence="1">
    <location>
        <position position="356"/>
    </location>
    <ligand>
        <name>substrate</name>
        <note>for pectinesterase activity</note>
    </ligand>
</feature>
<feature type="binding site" evidence="1">
    <location>
        <position position="386"/>
    </location>
    <ligand>
        <name>substrate</name>
        <note>for pectinesterase activity</note>
    </ligand>
</feature>
<feature type="binding site" evidence="1">
    <location>
        <position position="454"/>
    </location>
    <ligand>
        <name>substrate</name>
        <note>for pectinesterase activity</note>
    </ligand>
</feature>
<feature type="binding site" evidence="1">
    <location>
        <position position="498"/>
    </location>
    <ligand>
        <name>substrate</name>
        <note>for pectinesterase activity</note>
    </ligand>
</feature>
<feature type="binding site" evidence="1">
    <location>
        <position position="500"/>
    </location>
    <ligand>
        <name>substrate</name>
        <note>for pectinesterase activity</note>
    </ligand>
</feature>
<feature type="site" description="Transition state stabilizer" evidence="1">
    <location>
        <position position="408"/>
    </location>
</feature>
<feature type="glycosylation site" description="N-linked (GlcNAc...) asparagine" evidence="4">
    <location>
        <position position="96"/>
    </location>
</feature>
<feature type="glycosylation site" description="N-linked (GlcNAc...) asparagine" evidence="4">
    <location>
        <position position="215"/>
    </location>
</feature>
<feature type="disulfide bond" evidence="1">
    <location>
        <begin position="423"/>
        <end position="443"/>
    </location>
</feature>
<feature type="mutagenesis site" description="Lost activity. Confers sensitivity to zinc Zn(2+) when overexpressed." evidence="8">
    <original>Q</original>
    <variation>A</variation>
    <location>
        <position position="408"/>
    </location>
</feature>
<feature type="mutagenesis site" description="Lost activity. Confers sensitivity to zinc Zn(2+) when overexpressed." evidence="8">
    <original>D</original>
    <variation>A</variation>
    <location>
        <position position="409"/>
    </location>
</feature>
<feature type="mutagenesis site" description="In osz2; semi-dominant mutation with impaired proteolytic processing, and leading to an increased sensitivity to zinc Zn(2+) characterized by Zn-triggered reduced root elongation due to a defect in cell elongation, but an increase number of root hairs; this phenotype is suppressed by calcium Ca(2+) treatment. No obvious impact on pectin methylesterification." evidence="8">
    <original>G</original>
    <variation>V</variation>
    <location>
        <position position="497"/>
    </location>
</feature>
<feature type="sequence conflict" description="In Ref. 1; AAC72288." evidence="20" ref="1">
    <original>GV</original>
    <variation>AC</variation>
    <location>
        <begin position="81"/>
        <end position="82"/>
    </location>
</feature>
<feature type="sequence conflict" description="In Ref. 1; AAC72288." evidence="20" ref="1">
    <original>A</original>
    <variation>R</variation>
    <location>
        <position position="280"/>
    </location>
</feature>
<organism>
    <name type="scientific">Arabidopsis thaliana</name>
    <name type="common">Mouse-ear cress</name>
    <dbReference type="NCBI Taxonomy" id="3702"/>
    <lineage>
        <taxon>Eukaryota</taxon>
        <taxon>Viridiplantae</taxon>
        <taxon>Streptophyta</taxon>
        <taxon>Embryophyta</taxon>
        <taxon>Tracheophyta</taxon>
        <taxon>Spermatophyta</taxon>
        <taxon>Magnoliopsida</taxon>
        <taxon>eudicotyledons</taxon>
        <taxon>Gunneridae</taxon>
        <taxon>Pentapetalae</taxon>
        <taxon>rosids</taxon>
        <taxon>malvids</taxon>
        <taxon>Brassicales</taxon>
        <taxon>Brassicaceae</taxon>
        <taxon>Camelineae</taxon>
        <taxon>Arabidopsis</taxon>
    </lineage>
</organism>
<comment type="function">
    <text evidence="7 8 10 12">Acts in the modification of cell walls via demethylesterification of cell wall pectin (PubMed:21171891, PubMed:26183897). Required for zinc Zn(2+) homeostasis and to monitor Zn(2+) influence on cell wall-controlled growth processes such as root cell elongation (PubMed:23826687). Monitors seed germination and favors root hairs production (PubMed:28375469). Prevents cruciferin seed storage proteins activity, but promotes the expression of genes involved in cell wall organization and remodeling as well as genes involved in lipid and protein metabolism, during post-germinative growth of seedlings (PubMed:28375469). Confers sensitivity to Zn(2+) when overexpressed (PubMed:23826687). Acts as a susceptibility factor required for the initial colonization of the host tissue by virulent pathogens including Botrytis cinerea and Pectobacterium carotovorum, probably by facilitating cell wall pectine degradation by pathogen pectic enzymes after its demethylesterification (PubMed:21171891).</text>
</comment>
<comment type="catalytic activity">
    <reaction evidence="10">
        <text>[(1-&gt;4)-alpha-D-galacturonosyl methyl ester](n) + n H2O = [(1-&gt;4)-alpha-D-galacturonosyl](n) + n methanol + n H(+)</text>
        <dbReference type="Rhea" id="RHEA:22380"/>
        <dbReference type="Rhea" id="RHEA-COMP:14570"/>
        <dbReference type="Rhea" id="RHEA-COMP:14573"/>
        <dbReference type="ChEBI" id="CHEBI:15377"/>
        <dbReference type="ChEBI" id="CHEBI:15378"/>
        <dbReference type="ChEBI" id="CHEBI:17790"/>
        <dbReference type="ChEBI" id="CHEBI:140522"/>
        <dbReference type="ChEBI" id="CHEBI:140523"/>
        <dbReference type="EC" id="3.1.1.11"/>
    </reaction>
    <physiologicalReaction direction="left-to-right" evidence="10">
        <dbReference type="Rhea" id="RHEA:22381"/>
    </physiologicalReaction>
</comment>
<comment type="activity regulation">
    <text evidence="10 11 13">Regulated negatively by pectinesterase inhibitors (e.g. PMEI3, PMEI4, PMEI7 and PMEI9) in a pH-dependent manner, mainly in slightly acidic conditions (pH 6.0 and 5.0), especially in dark-grown hypocotyls; this processus relies on changes in the protonation of amino acids involved in intermolecular and intramolecular interactions.</text>
</comment>
<comment type="biophysicochemical properties">
    <kinetics>
        <KM evidence="10">12 uM for HG96B82</KM>
        <KM evidence="10">5 uM for HG96B69</KM>
        <KM evidence="10">9 uM for HG96B20</KM>
        <KM evidence="10">6 uM for HG97B77P63</KM>
        <KM evidence="10">224 uM for HG96P64</KM>
        <Vmax evidence="10">0.07 umol/min/ug enzyme with HG96B82 as substrate</Vmax>
        <Vmax evidence="10">0.05 umol/min/ug enzyme with HG96B69 as substrate</Vmax>
        <Vmax evidence="10">0.1 umol/min/ug enzyme with HG96B20 as substrate</Vmax>
        <Vmax evidence="10">0.05 umol/min/ug enzyme with HG97B77P63 as substrate</Vmax>
        <Vmax evidence="10">0.02 umol/min/ug enzyme with HG96P64 as substrate</Vmax>
    </kinetics>
    <phDependence>
        <text evidence="10">Optimum pH is 7.5 on homogalacturonan (HG) substrates with a degree of methylesterification between 60 and 80% and a random distribution of methyl esters.</text>
    </phDependence>
</comment>
<comment type="pathway">
    <text evidence="20">Glycan metabolism; pectin degradation; 2-dehydro-3-deoxy-D-gluconate from pectin: step 1/5.</text>
</comment>
<comment type="subunit">
    <text evidence="10 11 13 17">Interacts with BIIDXI and At5g11420 (PubMed:25442819). Binds reversibly to PMEI4, PMEI7 and PMEI8 to be inhibited; the stability of the PME3-PMEIs complexes and the inhibition of the pectin methylesterase (PME) activity is pH-dependent, based on protonation status of amino-acids at the complex interface (PubMed:26183897, PubMed:28034952, PubMed:29109147).</text>
</comment>
<comment type="subcellular location">
    <subcellularLocation>
        <location evidence="5">Secreted</location>
        <location evidence="5">Extracellular space</location>
        <location evidence="5">Apoplast</location>
    </subcellularLocation>
    <subcellularLocation>
        <location evidence="10">Secreted</location>
        <location evidence="10">Cell wall</location>
    </subcellularLocation>
    <text evidence="10">Present in hypocotyl cell walls.</text>
</comment>
<comment type="tissue specificity">
    <text evidence="6 10 12 14">Expressed in roots, cotyledons, hypocotyls, seedlings, leaves, stems, flowers, dry seeds and siliques (PubMed:16622707, PubMed:28375469, PubMed:9767082). Accumulates in etiolated hypocotyls (at protein level) (PubMed:26183897).</text>
</comment>
<comment type="developmental stage">
    <text evidence="6">Expressed throughout silique development.</text>
</comment>
<comment type="induction">
    <text evidence="7">Induced by necrotrophic pathogens such as Pectobacterium carotovorum and Botrytis cinerea.</text>
</comment>
<comment type="disruption phenotype">
    <text evidence="7 8 12">Early germination and reduced root hair production associated with lower expression of several pectin-degrading enzymes, genes involved in cell wall organization and remodeling and genes involved in lipid and protein metabolism, thus leading to a global decrease in proteolytic activity, however, cruciferin genes accumulate abnormally (PubMed:28375469). Normal sensitivity to zinc Zn(2+) (PubMed:23826687). Increased resistance to Botrytis cinerea and Pectobacterium carotovorum associated with a reduced global pectin methylesterase (PME) activity, and correlating with an impaired ability of pathogens to grow on methylesterified pectin (PubMed:21171891).</text>
</comment>
<comment type="biotechnology">
    <text evidence="9">Mutant pme3 facilitates efficiency of viable mesophyll protoplast isolation probably as a result of reduced methylesterified homogalacturonan (HGA) level.</text>
</comment>
<comment type="miscellaneous">
    <text evidence="2">The PMEI region may act as an autoinhibitory domain and prevent untimely PME activity during transport.</text>
</comment>
<comment type="similarity">
    <text evidence="20">In the N-terminal section; belongs to the PMEI family.</text>
</comment>
<comment type="similarity">
    <text evidence="20">In the C-terminal section; belongs to the pectinesterase family.</text>
</comment>
<comment type="sequence caution" evidence="20">
    <conflict type="frameshift">
        <sequence resource="EMBL-CDS" id="AAL24278"/>
    </conflict>
</comment>
<comment type="sequence caution" evidence="20">
    <conflict type="miscellaneous discrepancy">
        <sequence resource="EMBL-CDS" id="BAD94011"/>
    </conflict>
    <text>Intron retention.</text>
</comment>
<gene>
    <name evidence="18 19" type="primary">PME3</name>
    <name evidence="15" type="synonym">ARATH27</name>
    <name evidence="16" type="synonym">OZS2</name>
    <name evidence="21" type="ordered locus">At3g14310</name>
    <name evidence="22" type="ORF">MLN21.10</name>
</gene>
<keyword id="KW-0052">Apoplast</keyword>
<keyword id="KW-0063">Aspartyl esterase</keyword>
<keyword id="KW-0134">Cell wall</keyword>
<keyword id="KW-0961">Cell wall biogenesis/degradation</keyword>
<keyword id="KW-1015">Disulfide bond</keyword>
<keyword id="KW-0325">Glycoprotein</keyword>
<keyword id="KW-0378">Hydrolase</keyword>
<keyword id="KW-0611">Plant defense</keyword>
<keyword id="KW-1185">Reference proteome</keyword>
<keyword id="KW-0964">Secreted</keyword>
<keyword id="KW-0732">Signal</keyword>
<protein>
    <recommendedName>
        <fullName evidence="19">Pectinesterase/pectinesterase inhibitor 3</fullName>
    </recommendedName>
    <alternativeName>
        <fullName evidence="16">Protein OVERLY ZINC SENSITIVE 2</fullName>
    </alternativeName>
    <domain>
        <recommendedName>
            <fullName evidence="19">Pectinesterase inhibitor 3</fullName>
        </recommendedName>
        <alternativeName>
            <fullName evidence="19">Pectin methylesterase inhibitor 3</fullName>
        </alternativeName>
    </domain>
    <domain>
        <recommendedName>
            <fullName evidence="19">Pectinesterase 3</fullName>
            <shortName evidence="19">PE 3</shortName>
            <ecNumber evidence="10">3.1.1.11</ecNumber>
        </recommendedName>
        <alternativeName>
            <fullName evidence="15">Pectin methylesterase 27</fullName>
            <shortName evidence="15">AtPME27</shortName>
        </alternativeName>
        <alternativeName>
            <fullName evidence="18 19">Pectin methylesterase 3</fullName>
            <shortName evidence="18 19">AtPME3</shortName>
        </alternativeName>
    </domain>
    <component>
        <recommendedName>
            <fullName evidence="16">Pectinesterase 3 of 42 kDa</fullName>
        </recommendedName>
    </component>
    <component>
        <recommendedName>
            <fullName evidence="16">Pectinesterase 3 of 38 kDa</fullName>
        </recommendedName>
    </component>
</protein>
<proteinExistence type="evidence at protein level"/>
<evidence type="ECO:0000250" key="1">
    <source>
        <dbReference type="UniProtKB" id="P0C1A9"/>
    </source>
</evidence>
<evidence type="ECO:0000250" key="2">
    <source>
        <dbReference type="UniProtKB" id="Q43867"/>
    </source>
</evidence>
<evidence type="ECO:0000255" key="3"/>
<evidence type="ECO:0000255" key="4">
    <source>
        <dbReference type="PROSITE-ProRule" id="PRU00498"/>
    </source>
</evidence>
<evidence type="ECO:0000269" key="5">
    <source>
    </source>
</evidence>
<evidence type="ECO:0000269" key="6">
    <source>
    </source>
</evidence>
<evidence type="ECO:0000269" key="7">
    <source>
    </source>
</evidence>
<evidence type="ECO:0000269" key="8">
    <source>
    </source>
</evidence>
<evidence type="ECO:0000269" key="9">
    <source>
    </source>
</evidence>
<evidence type="ECO:0000269" key="10">
    <source>
    </source>
</evidence>
<evidence type="ECO:0000269" key="11">
    <source>
    </source>
</evidence>
<evidence type="ECO:0000269" key="12">
    <source>
    </source>
</evidence>
<evidence type="ECO:0000269" key="13">
    <source>
    </source>
</evidence>
<evidence type="ECO:0000269" key="14">
    <source>
    </source>
</evidence>
<evidence type="ECO:0000303" key="15">
    <source>
    </source>
</evidence>
<evidence type="ECO:0000303" key="16">
    <source>
    </source>
</evidence>
<evidence type="ECO:0000303" key="17">
    <source>
    </source>
</evidence>
<evidence type="ECO:0000303" key="18">
    <source>
    </source>
</evidence>
<evidence type="ECO:0000303" key="19">
    <source>
    </source>
</evidence>
<evidence type="ECO:0000305" key="20"/>
<evidence type="ECO:0000312" key="21">
    <source>
        <dbReference type="Araport" id="AT3G14310"/>
    </source>
</evidence>
<evidence type="ECO:0000312" key="22">
    <source>
        <dbReference type="EMBL" id="BAB01037.1"/>
    </source>
</evidence>
<name>PME3_ARATH</name>
<sequence length="592" mass="64256">MAPSMKEIFSKDNFKKNKKLVLLSAAVALLFVAAVAGISAGASKANEKRTLSPSSHAVLRSSCSSTRYPELCISAVVTAGGVELTSQKDVIEASVNLTITAVEHNYFTVKKLIKKRKGLTPREKTALHDCLETIDETLDELHETVEDLHLYPTKKTLREHAGDLKTLISSAITNQETCLDGFSHDDADKQVRKALLKGQIHVEHMCSNALAMIKNMTDTDIANFEQKAKITSNNRKLKEENQETTVAVDIAGAGELDSEGWPTWLSAGDRRLLQGSGVKADATVAADGSGTFKTVAAAVAAAPENSNKRYVIHIKAGVYRENVEVAKKKKNIMFMGDGRTRTIITGSRNVVDGSTTFHSATVAAVGERFLARDITFQNTAGPSKHQAVALRVGSDFSAFYNCDMLAYQDTLYVHSNRQFFVKCLIAGTVDFIFGNAAVVLQDCDIHARRPNSGQKNMVTAQGRTDPNQNTGIVIQKCRIGATSDLQSVKGSFPTYLGRPWKEYSQTVIMQSAISDVIRPEGWSEWTGTFALNTLTYREYSNTGAGAGTANRVKWRGFKVITAAAEAQKYTAGQFIGGGGWLSSTGFPFSLGL</sequence>
<dbReference type="EC" id="3.1.1.11" evidence="10"/>
<dbReference type="EMBL" id="AF033204">
    <property type="protein sequence ID" value="AAC72288.1"/>
    <property type="molecule type" value="Genomic_DNA"/>
</dbReference>
<dbReference type="EMBL" id="AB022220">
    <property type="protein sequence ID" value="BAB01037.1"/>
    <property type="molecule type" value="Genomic_DNA"/>
</dbReference>
<dbReference type="EMBL" id="CP002686">
    <property type="protein sequence ID" value="AEE75500.1"/>
    <property type="molecule type" value="Genomic_DNA"/>
</dbReference>
<dbReference type="EMBL" id="AY037184">
    <property type="protein sequence ID" value="AAK59769.1"/>
    <property type="molecule type" value="mRNA"/>
</dbReference>
<dbReference type="EMBL" id="AY052252">
    <property type="protein sequence ID" value="AAK97722.1"/>
    <property type="molecule type" value="mRNA"/>
</dbReference>
<dbReference type="EMBL" id="AY143950">
    <property type="protein sequence ID" value="AAN28889.1"/>
    <property type="molecule type" value="mRNA"/>
</dbReference>
<dbReference type="EMBL" id="AY058892">
    <property type="protein sequence ID" value="AAL24278.1"/>
    <property type="status" value="ALT_FRAME"/>
    <property type="molecule type" value="mRNA"/>
</dbReference>
<dbReference type="EMBL" id="AK221816">
    <property type="protein sequence ID" value="BAD94011.1"/>
    <property type="status" value="ALT_SEQ"/>
    <property type="molecule type" value="mRNA"/>
</dbReference>
<dbReference type="RefSeq" id="NP_188048.1">
    <property type="nucleotide sequence ID" value="NM_112289.3"/>
</dbReference>
<dbReference type="SMR" id="O49006"/>
<dbReference type="BioGRID" id="5985">
    <property type="interactions" value="3"/>
</dbReference>
<dbReference type="FunCoup" id="O49006">
    <property type="interactions" value="270"/>
</dbReference>
<dbReference type="IntAct" id="O49006">
    <property type="interactions" value="1"/>
</dbReference>
<dbReference type="STRING" id="3702.O49006"/>
<dbReference type="GlyCosmos" id="O49006">
    <property type="glycosylation" value="2 sites, No reported glycans"/>
</dbReference>
<dbReference type="GlyGen" id="O49006">
    <property type="glycosylation" value="2 sites"/>
</dbReference>
<dbReference type="iPTMnet" id="O49006"/>
<dbReference type="PaxDb" id="3702-AT3G14310.1"/>
<dbReference type="ProteomicsDB" id="226210"/>
<dbReference type="EnsemblPlants" id="AT3G14310.1">
    <property type="protein sequence ID" value="AT3G14310.1"/>
    <property type="gene ID" value="AT3G14310"/>
</dbReference>
<dbReference type="GeneID" id="820651"/>
<dbReference type="Gramene" id="AT3G14310.1">
    <property type="protein sequence ID" value="AT3G14310.1"/>
    <property type="gene ID" value="AT3G14310"/>
</dbReference>
<dbReference type="KEGG" id="ath:AT3G14310"/>
<dbReference type="Araport" id="AT3G14310"/>
<dbReference type="TAIR" id="AT3G14310">
    <property type="gene designation" value="PME3"/>
</dbReference>
<dbReference type="eggNOG" id="ENOG502QSQ4">
    <property type="taxonomic scope" value="Eukaryota"/>
</dbReference>
<dbReference type="HOGENOM" id="CLU_012243_9_1_1"/>
<dbReference type="InParanoid" id="O49006"/>
<dbReference type="OMA" id="HNFFTVE"/>
<dbReference type="PhylomeDB" id="O49006"/>
<dbReference type="BioCyc" id="ARA:AT3G14310-MONOMER"/>
<dbReference type="BRENDA" id="3.1.1.11">
    <property type="organism ID" value="399"/>
</dbReference>
<dbReference type="UniPathway" id="UPA00545">
    <property type="reaction ID" value="UER00823"/>
</dbReference>
<dbReference type="CD-CODE" id="4299E36E">
    <property type="entry name" value="Nucleolus"/>
</dbReference>
<dbReference type="PRO" id="PR:O49006"/>
<dbReference type="Proteomes" id="UP000006548">
    <property type="component" value="Chromosome 3"/>
</dbReference>
<dbReference type="ExpressionAtlas" id="O49006">
    <property type="expression patterns" value="baseline and differential"/>
</dbReference>
<dbReference type="GO" id="GO:0048046">
    <property type="term" value="C:apoplast"/>
    <property type="evidence" value="ECO:0007005"/>
    <property type="project" value="TAIR"/>
</dbReference>
<dbReference type="GO" id="GO:0005737">
    <property type="term" value="C:cytoplasm"/>
    <property type="evidence" value="ECO:0000314"/>
    <property type="project" value="TAIR"/>
</dbReference>
<dbReference type="GO" id="GO:0005829">
    <property type="term" value="C:cytosol"/>
    <property type="evidence" value="ECO:0007005"/>
    <property type="project" value="TAIR"/>
</dbReference>
<dbReference type="GO" id="GO:0009505">
    <property type="term" value="C:plant-type cell wall"/>
    <property type="evidence" value="ECO:0000314"/>
    <property type="project" value="UniProtKB"/>
</dbReference>
<dbReference type="GO" id="GO:0004857">
    <property type="term" value="F:enzyme inhibitor activity"/>
    <property type="evidence" value="ECO:0007669"/>
    <property type="project" value="InterPro"/>
</dbReference>
<dbReference type="GO" id="GO:0003729">
    <property type="term" value="F:mRNA binding"/>
    <property type="evidence" value="ECO:0000314"/>
    <property type="project" value="TAIR"/>
</dbReference>
<dbReference type="GO" id="GO:0030599">
    <property type="term" value="F:pectinesterase activity"/>
    <property type="evidence" value="ECO:0000314"/>
    <property type="project" value="UniProtKB"/>
</dbReference>
<dbReference type="GO" id="GO:0042545">
    <property type="term" value="P:cell wall modification"/>
    <property type="evidence" value="ECO:0007669"/>
    <property type="project" value="InterPro"/>
</dbReference>
<dbReference type="GO" id="GO:0042742">
    <property type="term" value="P:defense response to bacterium"/>
    <property type="evidence" value="ECO:0000315"/>
    <property type="project" value="UniProtKB"/>
</dbReference>
<dbReference type="GO" id="GO:0050832">
    <property type="term" value="P:defense response to fungus"/>
    <property type="evidence" value="ECO:0000315"/>
    <property type="project" value="UniProtKB"/>
</dbReference>
<dbReference type="GO" id="GO:0050829">
    <property type="term" value="P:defense response to Gram-negative bacterium"/>
    <property type="evidence" value="ECO:0000315"/>
    <property type="project" value="TAIR"/>
</dbReference>
<dbReference type="GO" id="GO:0010187">
    <property type="term" value="P:negative regulation of seed germination"/>
    <property type="evidence" value="ECO:0000315"/>
    <property type="project" value="UniProtKB"/>
</dbReference>
<dbReference type="GO" id="GO:0045490">
    <property type="term" value="P:pectin catabolic process"/>
    <property type="evidence" value="ECO:0000315"/>
    <property type="project" value="UniProtKB"/>
</dbReference>
<dbReference type="GO" id="GO:0010468">
    <property type="term" value="P:regulation of gene expression"/>
    <property type="evidence" value="ECO:0000315"/>
    <property type="project" value="UniProtKB"/>
</dbReference>
<dbReference type="GO" id="GO:0051510">
    <property type="term" value="P:regulation of unidimensional cell growth"/>
    <property type="evidence" value="ECO:0000315"/>
    <property type="project" value="UniProtKB"/>
</dbReference>
<dbReference type="GO" id="GO:0009617">
    <property type="term" value="P:response to bacterium"/>
    <property type="evidence" value="ECO:0000270"/>
    <property type="project" value="UniProtKB"/>
</dbReference>
<dbReference type="GO" id="GO:0009620">
    <property type="term" value="P:response to fungus"/>
    <property type="evidence" value="ECO:0000270"/>
    <property type="project" value="UniProtKB"/>
</dbReference>
<dbReference type="GO" id="GO:0009624">
    <property type="term" value="P:response to nematode"/>
    <property type="evidence" value="ECO:0000315"/>
    <property type="project" value="TAIR"/>
</dbReference>
<dbReference type="GO" id="GO:0010043">
    <property type="term" value="P:response to zinc ion"/>
    <property type="evidence" value="ECO:0000315"/>
    <property type="project" value="UniProtKB"/>
</dbReference>
<dbReference type="GO" id="GO:0048364">
    <property type="term" value="P:root development"/>
    <property type="evidence" value="ECO:0000315"/>
    <property type="project" value="UniProtKB"/>
</dbReference>
<dbReference type="GO" id="GO:0080147">
    <property type="term" value="P:root hair cell development"/>
    <property type="evidence" value="ECO:0000315"/>
    <property type="project" value="UniProtKB"/>
</dbReference>
<dbReference type="CDD" id="cd15798">
    <property type="entry name" value="PMEI-like_3"/>
    <property type="match status" value="1"/>
</dbReference>
<dbReference type="FunFam" id="1.20.140.40:FF:000010">
    <property type="entry name" value="Pectinesterase"/>
    <property type="match status" value="1"/>
</dbReference>
<dbReference type="FunFam" id="2.160.20.10:FF:000001">
    <property type="entry name" value="Pectinesterase"/>
    <property type="match status" value="1"/>
</dbReference>
<dbReference type="Gene3D" id="1.20.140.40">
    <property type="entry name" value="Invertase/pectin methylesterase inhibitor family protein"/>
    <property type="match status" value="1"/>
</dbReference>
<dbReference type="Gene3D" id="2.160.20.10">
    <property type="entry name" value="Single-stranded right-handed beta-helix, Pectin lyase-like"/>
    <property type="match status" value="1"/>
</dbReference>
<dbReference type="InterPro" id="IPR035513">
    <property type="entry name" value="Invertase/methylesterase_inhib"/>
</dbReference>
<dbReference type="InterPro" id="IPR012334">
    <property type="entry name" value="Pectin_lyas_fold"/>
</dbReference>
<dbReference type="InterPro" id="IPR011050">
    <property type="entry name" value="Pectin_lyase_fold/virulence"/>
</dbReference>
<dbReference type="InterPro" id="IPR033131">
    <property type="entry name" value="Pectinesterase_Asp_AS"/>
</dbReference>
<dbReference type="InterPro" id="IPR000070">
    <property type="entry name" value="Pectinesterase_cat"/>
</dbReference>
<dbReference type="InterPro" id="IPR006501">
    <property type="entry name" value="Pectinesterase_inhib_dom"/>
</dbReference>
<dbReference type="InterPro" id="IPR018040">
    <property type="entry name" value="Pectinesterase_Tyr_AS"/>
</dbReference>
<dbReference type="NCBIfam" id="TIGR01614">
    <property type="entry name" value="PME_inhib"/>
    <property type="match status" value="1"/>
</dbReference>
<dbReference type="PANTHER" id="PTHR31707">
    <property type="entry name" value="PECTINESTERASE"/>
    <property type="match status" value="1"/>
</dbReference>
<dbReference type="Pfam" id="PF01095">
    <property type="entry name" value="Pectinesterase"/>
    <property type="match status" value="1"/>
</dbReference>
<dbReference type="Pfam" id="PF04043">
    <property type="entry name" value="PMEI"/>
    <property type="match status" value="1"/>
</dbReference>
<dbReference type="SMART" id="SM00856">
    <property type="entry name" value="PMEI"/>
    <property type="match status" value="1"/>
</dbReference>
<dbReference type="SUPFAM" id="SSF51126">
    <property type="entry name" value="Pectin lyase-like"/>
    <property type="match status" value="1"/>
</dbReference>
<dbReference type="SUPFAM" id="SSF101148">
    <property type="entry name" value="Plant invertase/pectin methylesterase inhibitor"/>
    <property type="match status" value="1"/>
</dbReference>
<dbReference type="PROSITE" id="PS00800">
    <property type="entry name" value="PECTINESTERASE_1"/>
    <property type="match status" value="1"/>
</dbReference>
<dbReference type="PROSITE" id="PS00503">
    <property type="entry name" value="PECTINESTERASE_2"/>
    <property type="match status" value="1"/>
</dbReference>
<reference key="1">
    <citation type="journal article" date="1998" name="Gene">
        <title>Characterization of the pectin methylesterase-like gene AtPME3: a new member of a gene family comprising at least 12 genes in Arabidopsis thaliana.</title>
        <authorList>
            <person name="Micheli F."/>
            <person name="Holliger C."/>
            <person name="Goldberg R."/>
            <person name="Richard L."/>
        </authorList>
    </citation>
    <scope>NUCLEOTIDE SEQUENCE [GENOMIC DNA]</scope>
    <scope>TISSUE SPECIFICITY</scope>
</reference>
<reference key="2">
    <citation type="journal article" date="2000" name="DNA Res.">
        <title>Structural analysis of Arabidopsis thaliana chromosome 3. I. Sequence features of the regions of 4,504,864 bp covered by sixty P1 and TAC clones.</title>
        <authorList>
            <person name="Sato S."/>
            <person name="Nakamura Y."/>
            <person name="Kaneko T."/>
            <person name="Katoh T."/>
            <person name="Asamizu E."/>
            <person name="Tabata S."/>
        </authorList>
    </citation>
    <scope>NUCLEOTIDE SEQUENCE [LARGE SCALE GENOMIC DNA]</scope>
    <source>
        <strain>cv. Columbia</strain>
    </source>
</reference>
<reference key="3">
    <citation type="journal article" date="2017" name="Plant J.">
        <title>Araport11: a complete reannotation of the Arabidopsis thaliana reference genome.</title>
        <authorList>
            <person name="Cheng C.Y."/>
            <person name="Krishnakumar V."/>
            <person name="Chan A.P."/>
            <person name="Thibaud-Nissen F."/>
            <person name="Schobel S."/>
            <person name="Town C.D."/>
        </authorList>
    </citation>
    <scope>GENOME REANNOTATION</scope>
    <source>
        <strain>cv. Columbia</strain>
    </source>
</reference>
<reference key="4">
    <citation type="journal article" date="2003" name="Science">
        <title>Empirical analysis of transcriptional activity in the Arabidopsis genome.</title>
        <authorList>
            <person name="Yamada K."/>
            <person name="Lim J."/>
            <person name="Dale J.M."/>
            <person name="Chen H."/>
            <person name="Shinn P."/>
            <person name="Palm C.J."/>
            <person name="Southwick A.M."/>
            <person name="Wu H.C."/>
            <person name="Kim C.J."/>
            <person name="Nguyen M."/>
            <person name="Pham P.K."/>
            <person name="Cheuk R.F."/>
            <person name="Karlin-Newmann G."/>
            <person name="Liu S.X."/>
            <person name="Lam B."/>
            <person name="Sakano H."/>
            <person name="Wu T."/>
            <person name="Yu G."/>
            <person name="Miranda M."/>
            <person name="Quach H.L."/>
            <person name="Tripp M."/>
            <person name="Chang C.H."/>
            <person name="Lee J.M."/>
            <person name="Toriumi M.J."/>
            <person name="Chan M.M."/>
            <person name="Tang C.C."/>
            <person name="Onodera C.S."/>
            <person name="Deng J.M."/>
            <person name="Akiyama K."/>
            <person name="Ansari Y."/>
            <person name="Arakawa T."/>
            <person name="Banh J."/>
            <person name="Banno F."/>
            <person name="Bowser L."/>
            <person name="Brooks S.Y."/>
            <person name="Carninci P."/>
            <person name="Chao Q."/>
            <person name="Choy N."/>
            <person name="Enju A."/>
            <person name="Goldsmith A.D."/>
            <person name="Gurjal M."/>
            <person name="Hansen N.F."/>
            <person name="Hayashizaki Y."/>
            <person name="Johnson-Hopson C."/>
            <person name="Hsuan V.W."/>
            <person name="Iida K."/>
            <person name="Karnes M."/>
            <person name="Khan S."/>
            <person name="Koesema E."/>
            <person name="Ishida J."/>
            <person name="Jiang P.X."/>
            <person name="Jones T."/>
            <person name="Kawai J."/>
            <person name="Kamiya A."/>
            <person name="Meyers C."/>
            <person name="Nakajima M."/>
            <person name="Narusaka M."/>
            <person name="Seki M."/>
            <person name="Sakurai T."/>
            <person name="Satou M."/>
            <person name="Tamse R."/>
            <person name="Vaysberg M."/>
            <person name="Wallender E.K."/>
            <person name="Wong C."/>
            <person name="Yamamura Y."/>
            <person name="Yuan S."/>
            <person name="Shinozaki K."/>
            <person name="Davis R.W."/>
            <person name="Theologis A."/>
            <person name="Ecker J.R."/>
        </authorList>
    </citation>
    <scope>NUCLEOTIDE SEQUENCE [LARGE SCALE MRNA]</scope>
    <source>
        <strain>cv. Columbia</strain>
    </source>
</reference>
<reference key="5">
    <citation type="submission" date="2005-03" db="EMBL/GenBank/DDBJ databases">
        <title>Large-scale analysis of RIKEN Arabidopsis full-length (RAFL) cDNAs.</title>
        <authorList>
            <person name="Totoki Y."/>
            <person name="Seki M."/>
            <person name="Ishida J."/>
            <person name="Nakajima M."/>
            <person name="Enju A."/>
            <person name="Kamiya A."/>
            <person name="Narusaka M."/>
            <person name="Shin-i T."/>
            <person name="Nakagawa M."/>
            <person name="Sakamoto N."/>
            <person name="Oishi K."/>
            <person name="Kohara Y."/>
            <person name="Kobayashi M."/>
            <person name="Toyoda A."/>
            <person name="Sakaki Y."/>
            <person name="Sakurai T."/>
            <person name="Iida K."/>
            <person name="Akiyama K."/>
            <person name="Satou M."/>
            <person name="Toyoda T."/>
            <person name="Konagaya A."/>
            <person name="Carninci P."/>
            <person name="Kawai J."/>
            <person name="Hayashizaki Y."/>
            <person name="Shinozaki K."/>
        </authorList>
    </citation>
    <scope>NUCLEOTIDE SEQUENCE [LARGE SCALE MRNA]</scope>
    <source>
        <strain>cv. Columbia</strain>
    </source>
</reference>
<reference key="6">
    <citation type="journal article" date="2004" name="Carbohydr. Res.">
        <title>Pectin methylesterases: sequence-structural features and phylogenetic relationships.</title>
        <authorList>
            <person name="Markovic O."/>
            <person name="Janecek S."/>
        </authorList>
    </citation>
    <scope>GENE FAMILY</scope>
    <scope>NOMENCLATURE</scope>
</reference>
<reference key="7">
    <citation type="journal article" date="2005" name="Proteomics">
        <title>Cell wall proteins in apoplastic fluids of Arabidopsis thaliana rosettes: identification by mass spectrometry and bioinformatics.</title>
        <authorList>
            <person name="Boudart G."/>
            <person name="Jamet E."/>
            <person name="Rossignol M."/>
            <person name="Lafitte C."/>
            <person name="Borderies G."/>
            <person name="Jauneau A."/>
            <person name="Esquerre-Tugaye M.-T."/>
            <person name="Pont-Lezica R."/>
        </authorList>
    </citation>
    <scope>IDENTIFICATION BY MASS SPECTROMETRY</scope>
    <scope>SUBCELLULAR LOCATION [LARGE SCALE ANALYSIS]</scope>
    <source>
        <strain>cv. Columbia</strain>
    </source>
</reference>
<reference key="8">
    <citation type="journal article" date="2006" name="Planta">
        <title>Comprehensive expression profiling of the pectin methylesterase gene family during silique development in Arabidopsis thaliana.</title>
        <authorList>
            <person name="Louvet R."/>
            <person name="Cavel E."/>
            <person name="Gutierrez L."/>
            <person name="Guenin S."/>
            <person name="Roger D."/>
            <person name="Gillet F."/>
            <person name="Guerineau F."/>
            <person name="Pelloux J."/>
        </authorList>
    </citation>
    <scope>TISSUE SPECIFICITY</scope>
    <scope>DEVELOPMENTAL STAGE</scope>
</reference>
<reference key="9">
    <citation type="journal article" date="2011" name="Mol. Plant Microbe Interact.">
        <title>Pectin methylesterase is induced in Arabidopsis upon infection and is necessary for a successful colonization by necrotrophic pathogens.</title>
        <authorList>
            <person name="Raiola A."/>
            <person name="Lionetti V."/>
            <person name="Elmaghraby I."/>
            <person name="Immerzeel P."/>
            <person name="Mellerowicz E.J."/>
            <person name="Salvi G."/>
            <person name="Cervone F."/>
            <person name="Bellincampi D."/>
        </authorList>
    </citation>
    <scope>FUNCTION</scope>
    <scope>DISRUPTION PHENOTYPE</scope>
    <scope>INDUCTION BY NECROTROPHIC PATHOGENS</scope>
    <source>
        <strain>cv. Columbia</strain>
    </source>
</reference>
<reference key="10">
    <citation type="journal article" date="2013" name="Plant J.">
        <title>A mutation in the Arabidopsis thaliana cell wall biosynthesis gene pectin methylesterase 3 as well as its aberrant expression cause hypersensitivity specifically to Zn.</title>
        <authorList>
            <person name="Weber M."/>
            <person name="Deinlein U."/>
            <person name="Fischer S."/>
            <person name="Rogowski M."/>
            <person name="Geimer S."/>
            <person name="Tenhaken R."/>
            <person name="Clemens S."/>
        </authorList>
    </citation>
    <scope>FUNCTION</scope>
    <scope>MUTAGENESIS OF GLN-408; ASP-409 AND GLY-497</scope>
    <scope>DISRUPTION PHENOTYPE</scope>
    <scope>PROTEOLYTIC CLEAVAGE</scope>
    <source>
        <strain>cv. Columbia</strain>
    </source>
</reference>
<reference key="11">
    <citation type="journal article" date="2014" name="BMC Plant Biol.">
        <title>BIIDXI, the At4g32460 DUF642 gene, is involved in pectin methyl esterase regulation during Arabidopsis thaliana seed germination and plant development.</title>
        <authorList>
            <person name="Zuniga-Sanchez E."/>
            <person name="Soriano D."/>
            <person name="Martinez-Barajas E."/>
            <person name="Orozco-Segovia A."/>
            <person name="Gamboa-deBuen A."/>
        </authorList>
    </citation>
    <scope>INTERACTION WITH BIIDXI AND AT5G11420</scope>
    <source>
        <strain>cv. Columbia</strain>
    </source>
</reference>
<reference key="12">
    <citation type="journal article" date="2015" name="J. Biol. Chem.">
        <title>Tuning of pectin methylesterification: Pectin methylesterase inhibitor 7 modulates the processive activity of co-expressed pectin methylesterase 3 in a ph-dependent manner.</title>
        <authorList>
            <person name="Senechal F."/>
            <person name="L'Enfant M."/>
            <person name="Domon J.-M."/>
            <person name="Rosiau E."/>
            <person name="Crepeau M.-J."/>
            <person name="Surcouf O."/>
            <person name="Esquivel-Rodriguez J."/>
            <person name="Marcelo P."/>
            <person name="Mareck A."/>
            <person name="Guerineau F."/>
            <person name="Kim H.-R."/>
            <person name="Mravec J."/>
            <person name="Bonnin E."/>
            <person name="Jamet E."/>
            <person name="Kihara D."/>
            <person name="Lerouge P."/>
            <person name="Ralet M.-C."/>
            <person name="Pelloux J."/>
            <person name="Rayon C."/>
        </authorList>
    </citation>
    <scope>FUNCTION</scope>
    <scope>CATALYTIC ACTIVITY</scope>
    <scope>ACTIVITY REGULATION</scope>
    <scope>TISSUE SPECIFICITY</scope>
    <scope>SUBCELLULAR LOCATION</scope>
    <scope>BIOPHYSICOCHEMICAL PROPERTIES</scope>
    <scope>IDENTIFICATION BY MASS SPECTROMETRY</scope>
    <scope>INTERACTION WITH PMEI7</scope>
    <source>
        <strain>cv. Columbia</strain>
    </source>
</reference>
<reference key="13">
    <citation type="journal article" date="2015" name="Phytochemistry">
        <title>A lower content of de-methylesterified homogalacturonan improves enzymatic cell separation and isolation of mesophyll protoplasts in Arabidopsis.</title>
        <authorList>
            <person name="Lionetti V."/>
            <person name="Cervone F."/>
            <person name="De Lorenzo G."/>
        </authorList>
    </citation>
    <scope>BIOTECHNOLOGY</scope>
    <source>
        <strain>cv. Columbia</strain>
    </source>
</reference>
<reference key="14">
    <citation type="journal article" date="2017" name="J. Biol. Chem.">
        <title>Structural and dynamical characterization of the pH-dependence of the pectin methylesterase-pectin methylesterase inhibitor complex.</title>
        <authorList>
            <person name="Senechal F."/>
            <person name="Habrylo O."/>
            <person name="Hocq L."/>
            <person name="Domon J.M."/>
            <person name="Marcelo P."/>
            <person name="Lefebvre V."/>
            <person name="Pelloux J."/>
            <person name="Mercadante D."/>
        </authorList>
    </citation>
    <scope>ACTIVITY REGULATION</scope>
    <scope>INTERACTION WITH PMEI7</scope>
</reference>
<reference key="15">
    <citation type="journal article" date="2017" name="J. Exp. Bot.">
        <title>AtPME3, a ubiquitous cell wall pectin methylesterase of Arabidopsis thaliana, alters the metabolism of cruciferin seed storage proteins during post-germinative growth of seedlings.</title>
        <authorList>
            <person name="Guenin S."/>
            <person name="Hardouin J."/>
            <person name="Paynel F."/>
            <person name="Mueller K."/>
            <person name="Mongelard G."/>
            <person name="Driouich A."/>
            <person name="Lerouge P."/>
            <person name="Kermode A.R."/>
            <person name="Lehner A."/>
            <person name="Mollet J.-C."/>
            <person name="Pelloux J."/>
            <person name="Gutierrez L."/>
            <person name="Mareck A."/>
        </authorList>
    </citation>
    <scope>FUNCTION</scope>
    <scope>DISRUPTION PHENOTYPE</scope>
    <scope>TISSUE SPECIFICITY</scope>
    <source>
        <strain>cv. Columbia</strain>
    </source>
</reference>
<reference key="16">
    <citation type="journal article" date="2017" name="Plant Physiol.">
        <title>Combined experimental and computational approaches reveal distinct pH-dependence of pectin methyl esterase inhibitors.</title>
        <authorList>
            <person name="Hocq L."/>
            <person name="Senechal F."/>
            <person name="Lefebvre V."/>
            <person name="Lehner A."/>
            <person name="Domon J.-M."/>
            <person name="Mollet J.-C."/>
            <person name="Dehors J."/>
            <person name="Pageau K."/>
            <person name="Marcelo P."/>
            <person name="Guerineau F."/>
            <person name="Kolsek K."/>
            <person name="Mercadante D."/>
            <person name="Pelloux J."/>
        </authorList>
    </citation>
    <scope>ACTIVITY REGULATION</scope>
    <scope>INTERACTION WITH PMEI4 AND PMEI9</scope>
    <source>
        <strain>cv. Columbia</strain>
    </source>
</reference>
<reference key="17">
    <citation type="journal article" date="2022" name="Cell Surf.">
        <title>Biochemical characterization of pectin methylesterase inhibitor 3 from Arabidopsis thaliana.</title>
        <authorList>
            <person name="Xu F."/>
            <person name="Gonneau M."/>
            <person name="Faucher E."/>
            <person name="Habrylo O."/>
            <person name="Lefebvre V."/>
            <person name="Domon J.-M."/>
            <person name="Martin M."/>
            <person name="Senechal F."/>
            <person name="Peaucelle A."/>
            <person name="Pelloux J."/>
            <person name="Hoefte H."/>
        </authorList>
    </citation>
    <scope>ACTIVITY REGULATION</scope>
</reference>
<accession>O49006</accession>
<accession>Q56X61</accession>
<accession>Q93YZ2</accession>
<accession>Q9LUL7</accession>